<reference key="1">
    <citation type="journal article" date="1996" name="Biochem. Biophys. Res. Commun.">
        <title>Genomic structure and transcription of a murine odorant receptor gene: differential initiation of transcription in the olfactory and testicular cells.</title>
        <authorList>
            <person name="Asai H."/>
            <person name="Kasai H."/>
            <person name="Matsuda Y."/>
            <person name="Yamazaki N."/>
            <person name="Nagawa F."/>
            <person name="Sakano H."/>
            <person name="Tsuboi A."/>
        </authorList>
    </citation>
    <scope>NUCLEOTIDE SEQUENCE [GENOMIC DNA]</scope>
    <scope>TISSUE SPECIFICITY</scope>
</reference>
<reference key="2">
    <citation type="journal article" date="2003" name="Genome Biol.">
        <title>Odorant receptor expressed sequence tags demonstrate olfactory expression of over 400 genes, extensive alternate splicing and unequal expression levels.</title>
        <authorList>
            <person name="Young J.M."/>
            <person name="Shykind B.M."/>
            <person name="Lane R.P."/>
            <person name="Tonnes-Priddy L."/>
            <person name="Ross J.A."/>
            <person name="Walker M."/>
            <person name="Williams E.M."/>
            <person name="Trask B.J."/>
        </authorList>
    </citation>
    <scope>NUCLEOTIDE SEQUENCE [GENOMIC DNA]</scope>
</reference>
<reference key="3">
    <citation type="journal article" date="2009" name="PLoS Biol.">
        <title>Lineage-specific biology revealed by a finished genome assembly of the mouse.</title>
        <authorList>
            <person name="Church D.M."/>
            <person name="Goodstadt L."/>
            <person name="Hillier L.W."/>
            <person name="Zody M.C."/>
            <person name="Goldstein S."/>
            <person name="She X."/>
            <person name="Bult C.J."/>
            <person name="Agarwala R."/>
            <person name="Cherry J.L."/>
            <person name="DiCuccio M."/>
            <person name="Hlavina W."/>
            <person name="Kapustin Y."/>
            <person name="Meric P."/>
            <person name="Maglott D."/>
            <person name="Birtle Z."/>
            <person name="Marques A.C."/>
            <person name="Graves T."/>
            <person name="Zhou S."/>
            <person name="Teague B."/>
            <person name="Potamousis K."/>
            <person name="Churas C."/>
            <person name="Place M."/>
            <person name="Herschleb J."/>
            <person name="Runnheim R."/>
            <person name="Forrest D."/>
            <person name="Amos-Landgraf J."/>
            <person name="Schwartz D.C."/>
            <person name="Cheng Z."/>
            <person name="Lindblad-Toh K."/>
            <person name="Eichler E.E."/>
            <person name="Ponting C.P."/>
        </authorList>
    </citation>
    <scope>NUCLEOTIDE SEQUENCE [LARGE SCALE GENOMIC DNA]</scope>
    <source>
        <strain>C57BL/6J</strain>
    </source>
</reference>
<reference key="4">
    <citation type="journal article" date="2004" name="Genome Res.">
        <title>The status, quality, and expansion of the NIH full-length cDNA project: the Mammalian Gene Collection (MGC).</title>
        <authorList>
            <consortium name="The MGC Project Team"/>
        </authorList>
    </citation>
    <scope>NUCLEOTIDE SEQUENCE [LARGE SCALE MRNA]</scope>
    <source>
        <tissue>Brain</tissue>
    </source>
</reference>
<reference key="5">
    <citation type="journal article" date="1999" name="Proc. Natl. Acad. Sci. U.S.A.">
        <title>Functional identification and reconstitution of an odorant receptor in single olfactory neurons.</title>
        <authorList>
            <person name="Touhara K."/>
            <person name="Sengoku S."/>
            <person name="Inaki K."/>
            <person name="Tsuboi A."/>
            <person name="Hirono J."/>
            <person name="Sato T."/>
            <person name="Sakano H."/>
            <person name="Haga T."/>
        </authorList>
    </citation>
    <scope>FUNCTION</scope>
</reference>
<reference key="6">
    <citation type="journal article" date="2004" name="J. Cell Sci.">
        <title>Functional characterization of a mouse testicular olfactory receptor and its role in chemosensing and in regulation of sperm motility.</title>
        <authorList>
            <person name="Fukuda N."/>
            <person name="Yomogida K."/>
            <person name="Okabe M."/>
            <person name="Touhara K."/>
        </authorList>
    </citation>
    <scope>FUNCTION</scope>
    <scope>TISSUE SPECIFICITY</scope>
</reference>
<reference key="7">
    <citation type="journal article" date="2009" name="Dev. Cell">
        <title>MOR23 promotes muscle regeneration and regulates cell adhesion and migration.</title>
        <authorList>
            <person name="Griffin C.A."/>
            <person name="Kafadar K.A."/>
            <person name="Pavlath G.K."/>
        </authorList>
    </citation>
    <scope>FUNCTION</scope>
    <scope>DEVELOPMENTAL STAGE</scope>
</reference>
<reference key="8">
    <citation type="journal article" date="2015" name="Biochem. Biophys. Res. Commun.">
        <title>Expression of human olfactory receptor 10J5 in heart aorta, coronary artery, and endothelial cells and its functional role in angiogenesis.</title>
        <authorList>
            <person name="Kim S.H."/>
            <person name="Yoon Y.C."/>
            <person name="Lee A.S."/>
            <person name="Kang N."/>
            <person name="Koo J."/>
            <person name="Rhyu M.R."/>
            <person name="Park J.H."/>
        </authorList>
    </citation>
    <scope>FUNCTION</scope>
</reference>
<reference key="9">
    <citation type="journal article" date="2017" name="Sci. Rep.">
        <title>Olfactory receptor 10J5 responding to alpha-cedrene regulates hepatic steatosis via the cAMP-PKA pathway.</title>
        <authorList>
            <person name="Tong T."/>
            <person name="Ryu S.E."/>
            <person name="Min Y."/>
            <person name="de March C.A."/>
            <person name="Bushdid C."/>
            <person name="Golebiowski J."/>
            <person name="Moon C."/>
            <person name="Park T."/>
        </authorList>
    </citation>
    <scope>FUNCTION</scope>
    <scope>SUBCELLULAR LOCATION</scope>
</reference>
<comment type="function">
    <text evidence="3 4 5 6 7">Olfactory receptor. Activated by the synthetic floral odorant, lyral, and by alpha-cedrene, a sesquiterpene constituent of cedarwood oil (PubMed:10097159, PubMed:25791473, PubMed:28842679). Its activation increases intracellular Ca(2+) (PubMed:10097159, PubMed:15522887, PubMed:25791473, PubMed:28842679). Acts as a key regulator of myogenesis through its actions on cell migration and adhesion by activating the Ca(2+)-dependent AKT signal transduction pathway (PubMed:19922870). Also acts as a regulator of angiogenesis (PubMed:25791473). Moreover, plays a role in the regulation of lipid accumulation in hepatocytes via the cAMP-PKA pathway (PubMed:28842679). Involved in sperm chemotaxis and motility (PubMed:15522887).</text>
</comment>
<comment type="subcellular location">
    <subcellularLocation>
        <location evidence="7">Cell membrane</location>
        <topology evidence="1">Multi-pass membrane protein</topology>
    </subcellularLocation>
</comment>
<comment type="tissue specificity">
    <text evidence="4 8">Expressed in the olfactory epithelium as well as in the testis (PubMed:8619840). Expressed in round spermatids during stages VI-VIII of spermatogenesis (PubMed:15522887).</text>
</comment>
<comment type="developmental stage">
    <text evidence="5">Up-regulated during myogenesis in vitro and muscle regeneration in vivo.</text>
</comment>
<comment type="similarity">
    <text evidence="2">Belongs to the G-protein coupled receptor 1 family.</text>
</comment>
<feature type="chain" id="PRO_0000454829" description="Olfactory receptor 10J5">
    <location>
        <begin position="1"/>
        <end position="309"/>
    </location>
</feature>
<feature type="topological domain" description="Extracellular" evidence="10">
    <location>
        <begin position="1"/>
        <end position="27"/>
    </location>
</feature>
<feature type="transmembrane region" description="Helical; Name=1" evidence="1">
    <location>
        <begin position="28"/>
        <end position="48"/>
    </location>
</feature>
<feature type="topological domain" description="Cytoplasmic" evidence="10">
    <location>
        <begin position="49"/>
        <end position="57"/>
    </location>
</feature>
<feature type="transmembrane region" description="Helical; Name=2" evidence="1">
    <location>
        <begin position="58"/>
        <end position="78"/>
    </location>
</feature>
<feature type="topological domain" description="Extracellular" evidence="10">
    <location>
        <begin position="79"/>
        <end position="84"/>
    </location>
</feature>
<feature type="transmembrane region" description="Helical; Name=3" evidence="1">
    <location>
        <begin position="85"/>
        <end position="105"/>
    </location>
</feature>
<feature type="topological domain" description="Cytoplasmic" evidence="10">
    <location>
        <begin position="106"/>
        <end position="131"/>
    </location>
</feature>
<feature type="transmembrane region" description="Helical; Name=4" evidence="1">
    <location>
        <begin position="132"/>
        <end position="152"/>
    </location>
</feature>
<feature type="topological domain" description="Extracellular" evidence="10">
    <location>
        <begin position="153"/>
        <end position="203"/>
    </location>
</feature>
<feature type="transmembrane region" description="Helical; Name=5" evidence="1">
    <location>
        <begin position="204"/>
        <end position="224"/>
    </location>
</feature>
<feature type="topological domain" description="Cytoplasmic" evidence="10">
    <location>
        <begin position="225"/>
        <end position="235"/>
    </location>
</feature>
<feature type="transmembrane region" description="Helical; Name=6" evidence="1">
    <location>
        <begin position="236"/>
        <end position="256"/>
    </location>
</feature>
<feature type="topological domain" description="Extracellular" evidence="10">
    <location>
        <begin position="257"/>
        <end position="270"/>
    </location>
</feature>
<feature type="transmembrane region" description="Helical; Name=7" evidence="1">
    <location>
        <begin position="271"/>
        <end position="291"/>
    </location>
</feature>
<feature type="topological domain" description="Cytoplasmic" evidence="10">
    <location>
        <begin position="292"/>
        <end position="309"/>
    </location>
</feature>
<feature type="disulfide bond" evidence="2">
    <location>
        <begin position="97"/>
        <end position="178"/>
    </location>
</feature>
<gene>
    <name evidence="12" type="primary">Or10j5</name>
    <name evidence="9" type="synonym">Mor23</name>
    <name evidence="12" type="synonym">Olfr16</name>
</gene>
<keyword id="KW-0037">Angiogenesis</keyword>
<keyword id="KW-1003">Cell membrane</keyword>
<keyword id="KW-0145">Chemotaxis</keyword>
<keyword id="KW-1015">Disulfide bond</keyword>
<keyword id="KW-0297">G-protein coupled receptor</keyword>
<keyword id="KW-0472">Membrane</keyword>
<keyword id="KW-0517">Myogenesis</keyword>
<keyword id="KW-0552">Olfaction</keyword>
<keyword id="KW-0675">Receptor</keyword>
<keyword id="KW-1185">Reference proteome</keyword>
<keyword id="KW-0716">Sensory transduction</keyword>
<keyword id="KW-0807">Transducer</keyword>
<keyword id="KW-0812">Transmembrane</keyword>
<keyword id="KW-1133">Transmembrane helix</keyword>
<proteinExistence type="evidence at transcript level"/>
<organism evidence="11">
    <name type="scientific">Mus musculus</name>
    <name type="common">Mouse</name>
    <dbReference type="NCBI Taxonomy" id="10090"/>
    <lineage>
        <taxon>Eukaryota</taxon>
        <taxon>Metazoa</taxon>
        <taxon>Chordata</taxon>
        <taxon>Craniata</taxon>
        <taxon>Vertebrata</taxon>
        <taxon>Euteleostomi</taxon>
        <taxon>Mammalia</taxon>
        <taxon>Eutheria</taxon>
        <taxon>Euarchontoglires</taxon>
        <taxon>Glires</taxon>
        <taxon>Rodentia</taxon>
        <taxon>Myomorpha</taxon>
        <taxon>Muroidea</taxon>
        <taxon>Muridae</taxon>
        <taxon>Murinae</taxon>
        <taxon>Mus</taxon>
        <taxon>Mus</taxon>
    </lineage>
</organism>
<evidence type="ECO:0000255" key="1"/>
<evidence type="ECO:0000255" key="2">
    <source>
        <dbReference type="PROSITE-ProRule" id="PRU00521"/>
    </source>
</evidence>
<evidence type="ECO:0000269" key="3">
    <source>
    </source>
</evidence>
<evidence type="ECO:0000269" key="4">
    <source>
    </source>
</evidence>
<evidence type="ECO:0000269" key="5">
    <source>
    </source>
</evidence>
<evidence type="ECO:0000269" key="6">
    <source>
    </source>
</evidence>
<evidence type="ECO:0000269" key="7">
    <source>
    </source>
</evidence>
<evidence type="ECO:0000269" key="8">
    <source>
    </source>
</evidence>
<evidence type="ECO:0000303" key="9">
    <source>
    </source>
</evidence>
<evidence type="ECO:0000305" key="10"/>
<evidence type="ECO:0000312" key="11">
    <source>
        <dbReference type="EMBL" id="CAA63545.1"/>
    </source>
</evidence>
<evidence type="ECO:0000312" key="12">
    <source>
        <dbReference type="MGI" id="MGI:106648"/>
    </source>
</evidence>
<protein>
    <recommendedName>
        <fullName evidence="10">Olfactory receptor 10J5</fullName>
    </recommendedName>
    <alternativeName>
        <fullName>Olfactory receptor 16</fullName>
    </alternativeName>
</protein>
<sequence>MQRNNFTEVIEFVFLGFSSFGKHQITLFVVFLTIYILTLAGNIIIVTITHIDHHLHTPMYFFLSMLASSETVYTLVIVPRMLSSLIFYNLPISLAGCATQMFFFVTLATNNCFLLTAMGYDRYVAICNPLRYTIIMSKGMCALLVCGSLGTGLVMAVLHVPAMFHLPFCGTVVEHFFCDIYPVMKLSCVDTTVNEIINYGVSSFVILVPIGLIFISYVLIVSSILKIVSTEGQKKAFATCASHLTVVIVHYGCASIAYLKPKSESSVEKDLLLSVTYTIITPLLNPVVYSLRNKEVKDALCRAVGRNTS</sequence>
<dbReference type="EMBL" id="X92969">
    <property type="protein sequence ID" value="CAA63545.1"/>
    <property type="molecule type" value="Genomic_DNA"/>
</dbReference>
<dbReference type="EMBL" id="AY318634">
    <property type="protein sequence ID" value="AAP71794.1"/>
    <property type="molecule type" value="Genomic_DNA"/>
</dbReference>
<dbReference type="EMBL" id="BC119298">
    <property type="protein sequence ID" value="AAI19299.1"/>
    <property type="molecule type" value="mRNA"/>
</dbReference>
<dbReference type="EMBL" id="BC119300">
    <property type="protein sequence ID" value="AAI19301.1"/>
    <property type="molecule type" value="mRNA"/>
</dbReference>
<dbReference type="CCDS" id="CCDS15521.1"/>
<dbReference type="RefSeq" id="NP_032789.1">
    <property type="nucleotide sequence ID" value="NM_008763.2"/>
</dbReference>
<dbReference type="SMR" id="Q62007"/>
<dbReference type="FunCoup" id="Q62007">
    <property type="interactions" value="1162"/>
</dbReference>
<dbReference type="STRING" id="10090.ENSMUSP00000149249"/>
<dbReference type="PaxDb" id="10090-ENSMUSP00000041524"/>
<dbReference type="Antibodypedia" id="20471">
    <property type="antibodies" value="128 antibodies from 23 providers"/>
</dbReference>
<dbReference type="Ensembl" id="ENSMUST00000038432.7">
    <property type="protein sequence ID" value="ENSMUSP00000041524.5"/>
    <property type="gene ID" value="ENSMUSG00000037924.7"/>
</dbReference>
<dbReference type="Ensembl" id="ENSMUST00000215254.2">
    <property type="protein sequence ID" value="ENSMUSP00000149249.2"/>
    <property type="gene ID" value="ENSMUSG00000037924.7"/>
</dbReference>
<dbReference type="GeneID" id="18313"/>
<dbReference type="KEGG" id="mmu:18313"/>
<dbReference type="UCSC" id="uc007dqz.2">
    <property type="organism name" value="mouse"/>
</dbReference>
<dbReference type="AGR" id="MGI:106648"/>
<dbReference type="CTD" id="127385"/>
<dbReference type="MGI" id="MGI:106648">
    <property type="gene designation" value="Or10j5"/>
</dbReference>
<dbReference type="VEuPathDB" id="HostDB:ENSMUSG00000037924"/>
<dbReference type="eggNOG" id="ENOG502RU27">
    <property type="taxonomic scope" value="Eukaryota"/>
</dbReference>
<dbReference type="GeneTree" id="ENSGT00940000159272"/>
<dbReference type="HOGENOM" id="CLU_012526_1_2_1"/>
<dbReference type="InParanoid" id="Q62007"/>
<dbReference type="OMA" id="SIFGKHQ"/>
<dbReference type="OrthoDB" id="9975554at2759"/>
<dbReference type="PhylomeDB" id="Q62007"/>
<dbReference type="TreeFam" id="TF337624"/>
<dbReference type="Reactome" id="R-MMU-381753">
    <property type="pathway name" value="Olfactory Signaling Pathway"/>
</dbReference>
<dbReference type="BioGRID-ORCS" id="18313">
    <property type="hits" value="1 hit in 70 CRISPR screens"/>
</dbReference>
<dbReference type="PRO" id="PR:Q62007"/>
<dbReference type="Proteomes" id="UP000000589">
    <property type="component" value="Chromosome 1"/>
</dbReference>
<dbReference type="RNAct" id="Q62007">
    <property type="molecule type" value="protein"/>
</dbReference>
<dbReference type="Bgee" id="ENSMUSG00000037924">
    <property type="expression patterns" value="Expressed in spermatid and 21 other cell types or tissues"/>
</dbReference>
<dbReference type="GO" id="GO:0005789">
    <property type="term" value="C:endoplasmic reticulum membrane"/>
    <property type="evidence" value="ECO:0000304"/>
    <property type="project" value="Reactome"/>
</dbReference>
<dbReference type="GO" id="GO:0016020">
    <property type="term" value="C:membrane"/>
    <property type="evidence" value="ECO:0000247"/>
    <property type="project" value="MGI"/>
</dbReference>
<dbReference type="GO" id="GO:0005886">
    <property type="term" value="C:plasma membrane"/>
    <property type="evidence" value="ECO:0000314"/>
    <property type="project" value="UniProtKB"/>
</dbReference>
<dbReference type="GO" id="GO:0004930">
    <property type="term" value="F:G protein-coupled receptor activity"/>
    <property type="evidence" value="ECO:0007669"/>
    <property type="project" value="UniProtKB-KW"/>
</dbReference>
<dbReference type="GO" id="GO:0004984">
    <property type="term" value="F:olfactory receptor activity"/>
    <property type="evidence" value="ECO:0000314"/>
    <property type="project" value="UniProtKB"/>
</dbReference>
<dbReference type="GO" id="GO:0001525">
    <property type="term" value="P:angiogenesis"/>
    <property type="evidence" value="ECO:0007669"/>
    <property type="project" value="UniProtKB-KW"/>
</dbReference>
<dbReference type="GO" id="GO:0006935">
    <property type="term" value="P:chemotaxis"/>
    <property type="evidence" value="ECO:0000314"/>
    <property type="project" value="UniProtKB"/>
</dbReference>
<dbReference type="GO" id="GO:0007186">
    <property type="term" value="P:G protein-coupled receptor signaling pathway"/>
    <property type="evidence" value="ECO:0000247"/>
    <property type="project" value="MGI"/>
</dbReference>
<dbReference type="GO" id="GO:0007187">
    <property type="term" value="P:G protein-coupled receptor signaling pathway, coupled to cyclic nucleotide second messenger"/>
    <property type="evidence" value="ECO:0000314"/>
    <property type="project" value="UniProtKB"/>
</dbReference>
<dbReference type="GO" id="GO:0055088">
    <property type="term" value="P:lipid homeostasis"/>
    <property type="evidence" value="ECO:0000315"/>
    <property type="project" value="UniProtKB"/>
</dbReference>
<dbReference type="GO" id="GO:0007517">
    <property type="term" value="P:muscle organ development"/>
    <property type="evidence" value="ECO:0007669"/>
    <property type="project" value="UniProtKB-KW"/>
</dbReference>
<dbReference type="GO" id="GO:0045765">
    <property type="term" value="P:regulation of angiogenesis"/>
    <property type="evidence" value="ECO:0000315"/>
    <property type="project" value="UniProtKB"/>
</dbReference>
<dbReference type="GO" id="GO:0051147">
    <property type="term" value="P:regulation of muscle cell differentiation"/>
    <property type="evidence" value="ECO:0000315"/>
    <property type="project" value="UniProtKB"/>
</dbReference>
<dbReference type="GO" id="GO:0007608">
    <property type="term" value="P:sensory perception of smell"/>
    <property type="evidence" value="ECO:0000314"/>
    <property type="project" value="UniProtKB"/>
</dbReference>
<dbReference type="CDD" id="cd15225">
    <property type="entry name" value="7tmA_OR10A-like"/>
    <property type="match status" value="1"/>
</dbReference>
<dbReference type="FunFam" id="1.20.1070.10:FF:000001">
    <property type="entry name" value="Olfactory receptor"/>
    <property type="match status" value="1"/>
</dbReference>
<dbReference type="Gene3D" id="1.20.1070.10">
    <property type="entry name" value="Rhodopsin 7-helix transmembrane proteins"/>
    <property type="match status" value="1"/>
</dbReference>
<dbReference type="InterPro" id="IPR000276">
    <property type="entry name" value="GPCR_Rhodpsn"/>
</dbReference>
<dbReference type="InterPro" id="IPR017452">
    <property type="entry name" value="GPCR_Rhodpsn_7TM"/>
</dbReference>
<dbReference type="InterPro" id="IPR000725">
    <property type="entry name" value="Olfact_rcpt"/>
</dbReference>
<dbReference type="PANTHER" id="PTHR26453">
    <property type="entry name" value="OLFACTORY RECEPTOR"/>
    <property type="match status" value="1"/>
</dbReference>
<dbReference type="Pfam" id="PF13853">
    <property type="entry name" value="7tm_4"/>
    <property type="match status" value="1"/>
</dbReference>
<dbReference type="PRINTS" id="PR00237">
    <property type="entry name" value="GPCRRHODOPSN"/>
</dbReference>
<dbReference type="PRINTS" id="PR00245">
    <property type="entry name" value="OLFACTORYR"/>
</dbReference>
<dbReference type="SUPFAM" id="SSF81321">
    <property type="entry name" value="Family A G protein-coupled receptor-like"/>
    <property type="match status" value="1"/>
</dbReference>
<dbReference type="PROSITE" id="PS50262">
    <property type="entry name" value="G_PROTEIN_RECEP_F1_2"/>
    <property type="match status" value="1"/>
</dbReference>
<name>O10J5_MOUSE</name>
<accession>Q62007</accession>